<dbReference type="EC" id="1.14.11.61" evidence="3 4"/>
<dbReference type="EMBL" id="AB636151">
    <property type="protein sequence ID" value="BAL22345.1"/>
    <property type="molecule type" value="mRNA"/>
</dbReference>
<dbReference type="SMR" id="G9M9M2"/>
<dbReference type="BRENDA" id="1.14.11.61">
    <property type="organism ID" value="2773"/>
</dbReference>
<dbReference type="GO" id="GO:0016706">
    <property type="term" value="F:2-oxoglutarate-dependent dioxygenase activity"/>
    <property type="evidence" value="ECO:0000314"/>
    <property type="project" value="UniProtKB"/>
</dbReference>
<dbReference type="GO" id="GO:0046872">
    <property type="term" value="F:metal ion binding"/>
    <property type="evidence" value="ECO:0007669"/>
    <property type="project" value="UniProtKB-KW"/>
</dbReference>
<dbReference type="GO" id="GO:0009805">
    <property type="term" value="P:coumarin biosynthetic process"/>
    <property type="evidence" value="ECO:0000314"/>
    <property type="project" value="UniProtKB"/>
</dbReference>
<dbReference type="GO" id="GO:0009699">
    <property type="term" value="P:phenylpropanoid biosynthetic process"/>
    <property type="evidence" value="ECO:0000314"/>
    <property type="project" value="UniProtKB"/>
</dbReference>
<dbReference type="GO" id="GO:0009620">
    <property type="term" value="P:response to fungus"/>
    <property type="evidence" value="ECO:0000270"/>
    <property type="project" value="UniProtKB"/>
</dbReference>
<dbReference type="GO" id="GO:0002238">
    <property type="term" value="P:response to molecule of fungal origin"/>
    <property type="evidence" value="ECO:0000270"/>
    <property type="project" value="UniProtKB"/>
</dbReference>
<dbReference type="FunFam" id="2.60.120.330:FF:000023">
    <property type="entry name" value="Feruloyl CoA ortho-hydroxylase 1"/>
    <property type="match status" value="1"/>
</dbReference>
<dbReference type="Gene3D" id="2.60.120.330">
    <property type="entry name" value="B-lactam Antibiotic, Isopenicillin N Synthase, Chain"/>
    <property type="match status" value="1"/>
</dbReference>
<dbReference type="InterPro" id="IPR026992">
    <property type="entry name" value="DIOX_N"/>
</dbReference>
<dbReference type="InterPro" id="IPR044861">
    <property type="entry name" value="IPNS-like_FE2OG_OXY"/>
</dbReference>
<dbReference type="InterPro" id="IPR027443">
    <property type="entry name" value="IPNS-like_sf"/>
</dbReference>
<dbReference type="InterPro" id="IPR005123">
    <property type="entry name" value="Oxoglu/Fe-dep_dioxygenase_dom"/>
</dbReference>
<dbReference type="InterPro" id="IPR050295">
    <property type="entry name" value="Plant_2OG-oxidoreductases"/>
</dbReference>
<dbReference type="PANTHER" id="PTHR47991">
    <property type="entry name" value="OXOGLUTARATE/IRON-DEPENDENT DIOXYGENASE"/>
    <property type="match status" value="1"/>
</dbReference>
<dbReference type="Pfam" id="PF03171">
    <property type="entry name" value="2OG-FeII_Oxy"/>
    <property type="match status" value="1"/>
</dbReference>
<dbReference type="Pfam" id="PF14226">
    <property type="entry name" value="DIOX_N"/>
    <property type="match status" value="1"/>
</dbReference>
<dbReference type="SUPFAM" id="SSF51197">
    <property type="entry name" value="Clavaminate synthase-like"/>
    <property type="match status" value="1"/>
</dbReference>
<dbReference type="PROSITE" id="PS51471">
    <property type="entry name" value="FE2OG_OXY"/>
    <property type="match status" value="1"/>
</dbReference>
<gene>
    <name evidence="5" type="primary">F6H1-3</name>
</gene>
<name>F6H13_IPOBA</name>
<comment type="function">
    <text evidence="4">2-oxoglutarate (OG)- and Fe(II)-dependent dioxygenase (2OGD) involved in scopoletin biosynthesis (PubMed:22169019). Converts feruloyl CoA into 6'-hydroxyferuloyl CoA, and, at low efficiency, caffeoyl-CoA into 6'-hydroxycaffeate, but has no activity with p-coumaroyl-CoA (PubMed:22169019).</text>
</comment>
<comment type="catalytic activity">
    <reaction evidence="4">
        <text>(E)-feruloyl-CoA + 2-oxoglutarate + O2 = (E)-6-hydroxyferuloyl-CoA + succinate + CO2</text>
        <dbReference type="Rhea" id="RHEA:57856"/>
        <dbReference type="ChEBI" id="CHEBI:15379"/>
        <dbReference type="ChEBI" id="CHEBI:16526"/>
        <dbReference type="ChEBI" id="CHEBI:16810"/>
        <dbReference type="ChEBI" id="CHEBI:30031"/>
        <dbReference type="ChEBI" id="CHEBI:87305"/>
        <dbReference type="ChEBI" id="CHEBI:142390"/>
        <dbReference type="EC" id="1.14.11.61"/>
    </reaction>
</comment>
<comment type="cofactor">
    <cofactor evidence="2">
        <name>L-ascorbate</name>
        <dbReference type="ChEBI" id="CHEBI:38290"/>
    </cofactor>
</comment>
<comment type="cofactor">
    <cofactor evidence="3">
        <name>Fe(2+)</name>
        <dbReference type="ChEBI" id="CHEBI:29033"/>
    </cofactor>
    <text evidence="3">Binds 1 Fe(2+) ion per subunit.</text>
</comment>
<comment type="biophysicochemical properties">
    <kinetics>
        <KM evidence="4">10.15 uM for feruloyl-CoA</KM>
        <text evidence="4">kcat is 2.84 sec(-1) with feruloyl-CoA as substrate.</text>
    </kinetics>
    <phDependence>
        <text evidence="4">Optimum pH is 6.5.</text>
    </phDependence>
</comment>
<comment type="pathway">
    <text evidence="4">Phenylpropanoid metabolism.</text>
</comment>
<comment type="tissue specificity">
    <text evidence="4">Mostly expressed in tubers, and, at low levels, in underground stems, stems, leaves and petioles.</text>
</comment>
<comment type="induction">
    <text evidence="4">Transiently induced at low levels by fungal (F.oxysporum f.sp. batatas O-17) and chitosan treatments, in association with the accumulation of umbelliferone and its glucoside (skimmin) in the tubers.</text>
</comment>
<comment type="similarity">
    <text evidence="6">Belongs to the iron/ascorbate-dependent oxidoreductase family.</text>
</comment>
<proteinExistence type="evidence at protein level"/>
<feature type="chain" id="PRO_0000447355" description="Feruloyl CoA ortho-hydroxylase F6H1-3">
    <location>
        <begin position="1"/>
        <end position="358"/>
    </location>
</feature>
<feature type="domain" description="Fe2OG dioxygenase" evidence="3">
    <location>
        <begin position="200"/>
        <end position="308"/>
    </location>
</feature>
<feature type="binding site" evidence="1">
    <location>
        <position position="216"/>
    </location>
    <ligand>
        <name>2-oxoglutarate</name>
        <dbReference type="ChEBI" id="CHEBI:16810"/>
    </ligand>
</feature>
<feature type="binding site" evidence="3">
    <location>
        <position position="231"/>
    </location>
    <ligand>
        <name>Fe cation</name>
        <dbReference type="ChEBI" id="CHEBI:24875"/>
    </ligand>
</feature>
<feature type="binding site" evidence="3">
    <location>
        <position position="233"/>
    </location>
    <ligand>
        <name>Fe cation</name>
        <dbReference type="ChEBI" id="CHEBI:24875"/>
    </ligand>
</feature>
<feature type="binding site" evidence="3">
    <location>
        <position position="289"/>
    </location>
    <ligand>
        <name>Fe cation</name>
        <dbReference type="ChEBI" id="CHEBI:24875"/>
    </ligand>
</feature>
<feature type="binding site" evidence="3">
    <location>
        <position position="299"/>
    </location>
    <ligand>
        <name>2-oxoglutarate</name>
        <dbReference type="ChEBI" id="CHEBI:16810"/>
    </ligand>
</feature>
<feature type="binding site" evidence="1">
    <location>
        <position position="301"/>
    </location>
    <ligand>
        <name>2-oxoglutarate</name>
        <dbReference type="ChEBI" id="CHEBI:16810"/>
    </ligand>
</feature>
<evidence type="ECO:0000250" key="1">
    <source>
        <dbReference type="UniProtKB" id="D4N500"/>
    </source>
</evidence>
<evidence type="ECO:0000250" key="2">
    <source>
        <dbReference type="UniProtKB" id="Q9C899"/>
    </source>
</evidence>
<evidence type="ECO:0000255" key="3">
    <source>
        <dbReference type="PROSITE-ProRule" id="PRU00805"/>
    </source>
</evidence>
<evidence type="ECO:0000269" key="4">
    <source>
    </source>
</evidence>
<evidence type="ECO:0000303" key="5">
    <source>
    </source>
</evidence>
<evidence type="ECO:0000305" key="6"/>
<sequence>MPAVLSSVLSNITDFVVHEGNGVKGLADMGLQSLPKQYIQPAEERITTSTVIVDDTIPVIDLSEWGSDPKVGDLICEAAEKWGFFQIVNHGVPLEVLEEVKAATYRFFRLPAEEKNKHSKDNSPSNNVRYGTSFTPHAEKALEWKDFLSLFYVSDEEAAALWPSACRDEALTFMRNCDAVIKRLLKSLMKGLNVTEIDGTKESLLMGSKRINMNYYPKCPNPELTVGVGRHSDVSTLTILLQDQIGGLYVRKLDSDTWVHVPPINGAIVINVGDALQILSNGRYKSIEHRVIANGSNNRISVPIFVNPRPNDIIGPLPELLESGEKAVYKNVLYSDYVKHFFRKAHDGKETVDFAKIN</sequence>
<keyword id="KW-0223">Dioxygenase</keyword>
<keyword id="KW-0408">Iron</keyword>
<keyword id="KW-0479">Metal-binding</keyword>
<keyword id="KW-0560">Oxidoreductase</keyword>
<organism>
    <name type="scientific">Ipomoea batatas</name>
    <name type="common">Sweet potato</name>
    <name type="synonym">Convolvulus batatas</name>
    <dbReference type="NCBI Taxonomy" id="4120"/>
    <lineage>
        <taxon>Eukaryota</taxon>
        <taxon>Viridiplantae</taxon>
        <taxon>Streptophyta</taxon>
        <taxon>Embryophyta</taxon>
        <taxon>Tracheophyta</taxon>
        <taxon>Spermatophyta</taxon>
        <taxon>Magnoliopsida</taxon>
        <taxon>eudicotyledons</taxon>
        <taxon>Gunneridae</taxon>
        <taxon>Pentapetalae</taxon>
        <taxon>asterids</taxon>
        <taxon>lamiids</taxon>
        <taxon>Solanales</taxon>
        <taxon>Convolvulaceae</taxon>
        <taxon>Ipomoeeae</taxon>
        <taxon>Ipomoea</taxon>
    </lineage>
</organism>
<reference key="1">
    <citation type="journal article" date="2012" name="Phytochemistry">
        <title>Molecular cloning and functional analysis of the ortho-hydroxylases of p-coumaroyl coenzyme A/feruloyl coenzyme A involved in formation of umbelliferone and scopoletin in sweet potato, Ipomoea batatas (L.) Lam.</title>
        <authorList>
            <person name="Matsumoto S."/>
            <person name="Mizutani M."/>
            <person name="Sakata K."/>
            <person name="Shimizu B."/>
        </authorList>
    </citation>
    <scope>NUCLEOTIDE SEQUENCE [MRNA]</scope>
    <scope>FUNCTION</scope>
    <scope>CATALYTIC ACTIVITY</scope>
    <scope>BIOPHYSICOCHEMICAL PROPERTIES</scope>
    <scope>TISSUE SPECIFICITY</scope>
    <source>
        <tissue>Root tuber</tissue>
    </source>
</reference>
<accession>G9M9M2</accession>
<protein>
    <recommendedName>
        <fullName evidence="5">Feruloyl CoA ortho-hydroxylase F6H1-3</fullName>
        <shortName evidence="5">IbF6H1-3</shortName>
        <ecNumber evidence="3 4">1.14.11.61</ecNumber>
    </recommendedName>
    <alternativeName>
        <fullName evidence="5">2-oxoglutarate-dependent dioxygenase F6H1-3</fullName>
        <shortName evidence="5">2OGD F6H1-3</shortName>
    </alternativeName>
</protein>